<comment type="function">
    <text evidence="2">Binds 16S rRNA, required for the assembly of 30S particles and may also be responsible for determining the conformation of the 16S rRNA at the A site.</text>
</comment>
<comment type="cofactor">
    <cofactor evidence="2">
        <name>Zn(2+)</name>
        <dbReference type="ChEBI" id="CHEBI:29105"/>
    </cofactor>
    <text evidence="2">Binds 1 zinc ion per subunit.</text>
</comment>
<comment type="subunit">
    <text evidence="2">Part of the 30S ribosomal subunit. Contacts proteins S3 and S10.</text>
</comment>
<comment type="similarity">
    <text evidence="2">Belongs to the universal ribosomal protein uS14 family. Zinc-binding uS14 subfamily.</text>
</comment>
<protein>
    <recommendedName>
        <fullName evidence="2">Small ribosomal subunit protein uS14</fullName>
    </recommendedName>
    <alternativeName>
        <fullName evidence="3">30S ribosomal protein S14 type Z</fullName>
    </alternativeName>
</protein>
<feature type="initiator methionine" description="Removed" evidence="1">
    <location>
        <position position="1"/>
    </location>
</feature>
<feature type="chain" id="PRO_0000130956" description="Small ribosomal subunit protein uS14">
    <location>
        <begin position="2"/>
        <end position="61"/>
    </location>
</feature>
<feature type="binding site" evidence="2">
    <location>
        <position position="24"/>
    </location>
    <ligand>
        <name>Zn(2+)</name>
        <dbReference type="ChEBI" id="CHEBI:29105"/>
    </ligand>
</feature>
<feature type="binding site" evidence="2">
    <location>
        <position position="27"/>
    </location>
    <ligand>
        <name>Zn(2+)</name>
        <dbReference type="ChEBI" id="CHEBI:29105"/>
    </ligand>
</feature>
<feature type="binding site" evidence="2">
    <location>
        <position position="40"/>
    </location>
    <ligand>
        <name>Zn(2+)</name>
        <dbReference type="ChEBI" id="CHEBI:29105"/>
    </ligand>
</feature>
<feature type="binding site" evidence="2">
    <location>
        <position position="43"/>
    </location>
    <ligand>
        <name>Zn(2+)</name>
        <dbReference type="ChEBI" id="CHEBI:29105"/>
    </ligand>
</feature>
<feature type="helix" evidence="4">
    <location>
        <begin position="5"/>
        <end position="11"/>
    </location>
</feature>
<feature type="strand" evidence="4">
    <location>
        <begin position="17"/>
        <end position="19"/>
    </location>
</feature>
<feature type="strand" evidence="4">
    <location>
        <begin position="25"/>
        <end position="27"/>
    </location>
</feature>
<feature type="strand" evidence="4">
    <location>
        <begin position="31"/>
        <end position="34"/>
    </location>
</feature>
<feature type="turn" evidence="4">
    <location>
        <begin position="35"/>
        <end position="38"/>
    </location>
</feature>
<feature type="helix" evidence="4">
    <location>
        <begin position="41"/>
        <end position="50"/>
    </location>
</feature>
<feature type="strand" evidence="4">
    <location>
        <begin position="53"/>
        <end position="55"/>
    </location>
</feature>
<dbReference type="EMBL" id="Z31558">
    <property type="protein sequence ID" value="CAA83433.1"/>
    <property type="molecule type" value="Genomic_DNA"/>
</dbReference>
<dbReference type="RefSeq" id="WP_008633399.1">
    <property type="nucleotide sequence ID" value="NZ_VHHQ01000024.1"/>
</dbReference>
<dbReference type="PDB" id="4V8X">
    <property type="method" value="X-ray"/>
    <property type="resolution" value="3.35 A"/>
    <property type="chains" value="AN/CN=1-61"/>
</dbReference>
<dbReference type="PDBsum" id="4V8X"/>
<dbReference type="SMR" id="P24320"/>
<dbReference type="OMA" id="RAYTRCN"/>
<dbReference type="GO" id="GO:0005737">
    <property type="term" value="C:cytoplasm"/>
    <property type="evidence" value="ECO:0007669"/>
    <property type="project" value="UniProtKB-ARBA"/>
</dbReference>
<dbReference type="GO" id="GO:0015935">
    <property type="term" value="C:small ribosomal subunit"/>
    <property type="evidence" value="ECO:0007669"/>
    <property type="project" value="TreeGrafter"/>
</dbReference>
<dbReference type="GO" id="GO:0019843">
    <property type="term" value="F:rRNA binding"/>
    <property type="evidence" value="ECO:0007669"/>
    <property type="project" value="UniProtKB-UniRule"/>
</dbReference>
<dbReference type="GO" id="GO:0003735">
    <property type="term" value="F:structural constituent of ribosome"/>
    <property type="evidence" value="ECO:0007669"/>
    <property type="project" value="InterPro"/>
</dbReference>
<dbReference type="GO" id="GO:0008270">
    <property type="term" value="F:zinc ion binding"/>
    <property type="evidence" value="ECO:0007669"/>
    <property type="project" value="UniProtKB-UniRule"/>
</dbReference>
<dbReference type="GO" id="GO:0006412">
    <property type="term" value="P:translation"/>
    <property type="evidence" value="ECO:0007669"/>
    <property type="project" value="UniProtKB-UniRule"/>
</dbReference>
<dbReference type="FunFam" id="4.10.830.10:FF:000001">
    <property type="entry name" value="30S ribosomal protein S14 type Z"/>
    <property type="match status" value="1"/>
</dbReference>
<dbReference type="Gene3D" id="4.10.830.10">
    <property type="entry name" value="30s Ribosomal Protein S14, Chain N"/>
    <property type="match status" value="1"/>
</dbReference>
<dbReference type="HAMAP" id="MF_01364_B">
    <property type="entry name" value="Ribosomal_uS14_2_B"/>
    <property type="match status" value="1"/>
</dbReference>
<dbReference type="InterPro" id="IPR001209">
    <property type="entry name" value="Ribosomal_uS14"/>
</dbReference>
<dbReference type="InterPro" id="IPR023053">
    <property type="entry name" value="Ribosomal_uS14_bact"/>
</dbReference>
<dbReference type="InterPro" id="IPR018271">
    <property type="entry name" value="Ribosomal_uS14_CS"/>
</dbReference>
<dbReference type="InterPro" id="IPR043140">
    <property type="entry name" value="Ribosomal_uS14_sf"/>
</dbReference>
<dbReference type="NCBIfam" id="NF005974">
    <property type="entry name" value="PRK08061.1"/>
    <property type="match status" value="1"/>
</dbReference>
<dbReference type="PANTHER" id="PTHR19836">
    <property type="entry name" value="30S RIBOSOMAL PROTEIN S14"/>
    <property type="match status" value="1"/>
</dbReference>
<dbReference type="PANTHER" id="PTHR19836:SF19">
    <property type="entry name" value="SMALL RIBOSOMAL SUBUNIT PROTEIN US14M"/>
    <property type="match status" value="1"/>
</dbReference>
<dbReference type="Pfam" id="PF00253">
    <property type="entry name" value="Ribosomal_S14"/>
    <property type="match status" value="1"/>
</dbReference>
<dbReference type="SUPFAM" id="SSF57716">
    <property type="entry name" value="Glucocorticoid receptor-like (DNA-binding domain)"/>
    <property type="match status" value="1"/>
</dbReference>
<dbReference type="PROSITE" id="PS00527">
    <property type="entry name" value="RIBOSOMAL_S14"/>
    <property type="match status" value="1"/>
</dbReference>
<gene>
    <name evidence="2" type="primary">rpsZ</name>
    <name evidence="2" type="synonym">rps14</name>
    <name evidence="2" type="synonym">rpsN</name>
</gene>
<reference key="1">
    <citation type="journal article" date="1997" name="Gene">
        <title>Sequencing and analysis of the Thermus thermophilus ribosomal protein gene cluster equivalent to the spectinomycin operon.</title>
        <authorList>
            <person name="Vysotskaya V.S."/>
            <person name="Shcherbakov D.V."/>
            <person name="Garber M.B."/>
        </authorList>
    </citation>
    <scope>NUCLEOTIDE SEQUENCE [GENOMIC DNA]</scope>
    <source>
        <strain>VK1</strain>
    </source>
</reference>
<name>RS14Z_THETH</name>
<keyword id="KW-0002">3D-structure</keyword>
<keyword id="KW-0479">Metal-binding</keyword>
<keyword id="KW-0687">Ribonucleoprotein</keyword>
<keyword id="KW-0689">Ribosomal protein</keyword>
<keyword id="KW-0694">RNA-binding</keyword>
<keyword id="KW-0699">rRNA-binding</keyword>
<keyword id="KW-0862">Zinc</keyword>
<evidence type="ECO:0000250" key="1"/>
<evidence type="ECO:0000255" key="2">
    <source>
        <dbReference type="HAMAP-Rule" id="MF_01364"/>
    </source>
</evidence>
<evidence type="ECO:0000305" key="3"/>
<evidence type="ECO:0007829" key="4">
    <source>
        <dbReference type="PDB" id="4V8X"/>
    </source>
</evidence>
<proteinExistence type="evidence at protein level"/>
<accession>P24320</accession>
<sequence length="61" mass="7140">MARKALIEKAKRTPKFKVRAYTRCVRCGRARSVYRFFGLCRICLRELAHKGQLPGVRKASW</sequence>
<organism>
    <name type="scientific">Thermus thermophilus</name>
    <dbReference type="NCBI Taxonomy" id="274"/>
    <lineage>
        <taxon>Bacteria</taxon>
        <taxon>Thermotogati</taxon>
        <taxon>Deinococcota</taxon>
        <taxon>Deinococci</taxon>
        <taxon>Thermales</taxon>
        <taxon>Thermaceae</taxon>
        <taxon>Thermus</taxon>
    </lineage>
</organism>